<organism>
    <name type="scientific">Mus musculus</name>
    <name type="common">Mouse</name>
    <dbReference type="NCBI Taxonomy" id="10090"/>
    <lineage>
        <taxon>Eukaryota</taxon>
        <taxon>Metazoa</taxon>
        <taxon>Chordata</taxon>
        <taxon>Craniata</taxon>
        <taxon>Vertebrata</taxon>
        <taxon>Euteleostomi</taxon>
        <taxon>Mammalia</taxon>
        <taxon>Eutheria</taxon>
        <taxon>Euarchontoglires</taxon>
        <taxon>Glires</taxon>
        <taxon>Rodentia</taxon>
        <taxon>Myomorpha</taxon>
        <taxon>Muroidea</taxon>
        <taxon>Muridae</taxon>
        <taxon>Murinae</taxon>
        <taxon>Mus</taxon>
        <taxon>Mus</taxon>
    </lineage>
</organism>
<comment type="function">
    <text evidence="2 10">E3 ubiquitin-protein ligase component of the LUBAC complex which conjugates linear ('Met-1'-linked) polyubiquitin chains to substrates and plays a key role in NF-kappa-B activation and regulation of inflammation (PubMed:28701375). LUBAC conjugates linear polyubiquitin to IKBKG and RIPK1 and is involved in activation of the canonical NF-kappa-B and the JNK signaling pathways (By similarity). Linear ubiquitination mediated by the LUBAC complex interferes with TNF-induced cell death and thereby prevents inflammation (PubMed:28701375). LUBAC is recruited to the TNF-R1 signaling complex (TNF-RSC) following polyubiquitination of TNF-RSC components by BIRC2 and/or BIRC3 and to conjugate linear polyubiquitin to IKBKG and possibly other components contributing to the stability of the complex (By similarity). The LUBAC complex is also involved in innate immunity by conjugating linear polyubiquitin chains at the surface of bacteria invading the cytosol to form the ubiquitin coat surrounding bacteria (By similarity). LUBAC is not able to initiate formation of the bacterial ubiquitin coat, and can only promote formation of linear polyubiquitins on pre-existing ubiquitin (By similarity). Recruited to the surface of bacteria by RNF213, which initiates the bacterial ubiquitin coat (By similarity). The bacterial ubiquitin coat acts as an 'eat-me' signal for xenophagy and promotes NF-kappa-B activation (By similarity). Together with OTULIN, the LUBAC complex regulates the canonical Wnt signaling during angiogenesis (By similarity). RNF31 is required for linear ubiquitination of BCL10, thereby promoting TCR-induced NF-kappa-B activation (By similarity). Binds polyubiquitin of different linkage types (By similarity).</text>
</comment>
<comment type="catalytic activity">
    <reaction evidence="2">
        <text>[E2 ubiquitin-conjugating enzyme]-S-ubiquitinyl-L-cysteine + [acceptor protein]-L-lysine = [E2 ubiquitin-conjugating enzyme]-L-cysteine + [acceptor protein]-N(6)-ubiquitinyl-L-lysine.</text>
        <dbReference type="EC" id="2.3.2.31"/>
    </reaction>
</comment>
<comment type="pathway">
    <text evidence="2">Protein modification; protein ubiquitination.</text>
</comment>
<comment type="subunit">
    <text evidence="2 8 9">Component of the LUBAC complex (linear ubiquitin chain assembly complex) which consists of SHARPIN, RBCK1 and RNF31 (By similarity). LUBAC has a MW of approximately 600 kDa suggesting a heteromultimeric assembly of its subunits (By similarity). Associates with the TNF-R1 signaling complex (TNF-RSC) in a stimulation-dependent manner (By similarity). Interacts (via the PUB domain) with OTULIN (via the PIM motif); the interaction is direct (PubMed:23708998). Interacts (via the PUB domain) with VCP (via the PIM motif) (By similarity). Interacts (via the PUB domain) with SPATA2 (via the PIM motif); interaction is direct and bridges RNF31 and CYLD (By similarity). Interacts with CYLD; the interaction is indirect and is mediated via SPATA2 (By similarity). Interacts with MUSK (PubMed:14678832). Interacts with CARD11, promoting linear ubiquitination of BCL10 (By similarity).</text>
</comment>
<comment type="interaction">
    <interactant intactId="EBI-647680">
        <id>Q924T7</id>
    </interactant>
    <interactant intactId="EBI-998011">
        <id>O88522</id>
        <label>Ikbkg</label>
    </interactant>
    <organismsDiffer>false</organismsDiffer>
    <experiments>7</experiments>
</comment>
<comment type="interaction">
    <interactant intactId="EBI-647680">
        <id>Q924T7</id>
    </interactant>
    <interactant intactId="EBI-6141072">
        <id>Q9WUB0</id>
        <label>Rbck1</label>
    </interactant>
    <organismsDiffer>false</organismsDiffer>
    <experiments>10</experiments>
</comment>
<comment type="interaction">
    <interactant intactId="EBI-647680">
        <id>Q924T7</id>
    </interactant>
    <interactant intactId="EBI-646097">
        <id>Q91WA6</id>
        <label>Sharpin</label>
    </interactant>
    <organismsDiffer>false</organismsDiffer>
    <experiments>10</experiments>
</comment>
<comment type="subcellular location">
    <subcellularLocation>
        <location evidence="8">Cytoplasm</location>
    </subcellularLocation>
</comment>
<comment type="alternative products">
    <event type="alternative splicing"/>
    <isoform>
        <id>Q924T7-1</id>
        <name>1</name>
        <sequence type="displayed"/>
    </isoform>
    <isoform>
        <id>Q924T7-2</id>
        <name>2</name>
        <sequence type="described" ref="VSP_009649"/>
    </isoform>
</comment>
<comment type="tissue specificity">
    <text evidence="8">Widely expressed (at protein level). Not expressed in heart.</text>
</comment>
<comment type="domain">
    <text evidence="2">The PUB domain mediates interaction with the PIM motifs of VCP and RNF31, with a strong preference for RNF31.</text>
</comment>
<comment type="domain">
    <text evidence="2">The RanBP2-type zinc fingers mediate the specific interaction with ubiquitin.</text>
</comment>
<comment type="domain">
    <text evidence="2">The UBA domain mediates association with RBCK1/HOIL1 via interaction with its UBL domain.</text>
</comment>
<comment type="domain">
    <text evidence="2">RING 1 and IBR zinc-fingers catalyze the first step transfer of ubiquitin from the E2 onto RING 2, to transiently form a HECT-like covalent thioester intermediate.</text>
</comment>
<comment type="domain">
    <text evidence="2">The linear ubiquitin chain determining domain (LDD) mediates the final transfer of ubiquitin from RING 2 onto the N-terminus of a target ubiquitin.</text>
</comment>
<comment type="PTM">
    <text evidence="11">Autoubiquitinated (PubMed:29950720). Interaction with OTULIN is required to suppress formation of 'Met-1'-linked polyubiquitin chains and prevent subsequent inactivation of the LUBAC complex (PubMed:29950720).</text>
</comment>
<comment type="PTM">
    <text evidence="2">Cleaved by caspase during apoptosis.</text>
</comment>
<comment type="similarity">
    <text evidence="13">Belongs to the RBR family.</text>
</comment>
<evidence type="ECO:0000250" key="1"/>
<evidence type="ECO:0000250" key="2">
    <source>
        <dbReference type="UniProtKB" id="Q96EP0"/>
    </source>
</evidence>
<evidence type="ECO:0000255" key="3"/>
<evidence type="ECO:0000255" key="4">
    <source>
        <dbReference type="PROSITE-ProRule" id="PRU00212"/>
    </source>
</evidence>
<evidence type="ECO:0000255" key="5">
    <source>
        <dbReference type="PROSITE-ProRule" id="PRU00322"/>
    </source>
</evidence>
<evidence type="ECO:0000255" key="6">
    <source>
        <dbReference type="PROSITE-ProRule" id="PRU01221"/>
    </source>
</evidence>
<evidence type="ECO:0000256" key="7">
    <source>
        <dbReference type="SAM" id="MobiDB-lite"/>
    </source>
</evidence>
<evidence type="ECO:0000269" key="8">
    <source>
    </source>
</evidence>
<evidence type="ECO:0000269" key="9">
    <source>
    </source>
</evidence>
<evidence type="ECO:0000269" key="10">
    <source>
    </source>
</evidence>
<evidence type="ECO:0000269" key="11">
    <source>
    </source>
</evidence>
<evidence type="ECO:0000303" key="12">
    <source>
    </source>
</evidence>
<evidence type="ECO:0000305" key="13"/>
<evidence type="ECO:0000312" key="14">
    <source>
        <dbReference type="MGI" id="MGI:1934704"/>
    </source>
</evidence>
<evidence type="ECO:0007829" key="15">
    <source>
        <dbReference type="PDB" id="5Y3T"/>
    </source>
</evidence>
<dbReference type="EC" id="2.3.2.31" evidence="2"/>
<dbReference type="EMBL" id="AB053120">
    <property type="protein sequence ID" value="BAB47406.1"/>
    <property type="molecule type" value="Genomic_DNA"/>
</dbReference>
<dbReference type="EMBL" id="BC057595">
    <property type="protein sequence ID" value="AAH57595.1"/>
    <property type="molecule type" value="mRNA"/>
</dbReference>
<dbReference type="CCDS" id="CCDS27118.1">
    <molecule id="Q924T7-1"/>
</dbReference>
<dbReference type="RefSeq" id="NP_919327.2">
    <molecule id="Q924T7-1"/>
    <property type="nucleotide sequence ID" value="NM_194346.2"/>
</dbReference>
<dbReference type="PDB" id="5Y3T">
    <property type="method" value="X-ray"/>
    <property type="resolution" value="2.40 A"/>
    <property type="chains" value="B=474-630"/>
</dbReference>
<dbReference type="PDBsum" id="5Y3T"/>
<dbReference type="SMR" id="Q924T7"/>
<dbReference type="BioGRID" id="234548">
    <property type="interactions" value="22"/>
</dbReference>
<dbReference type="DIP" id="DIP-49579N"/>
<dbReference type="FunCoup" id="Q924T7">
    <property type="interactions" value="1293"/>
</dbReference>
<dbReference type="IntAct" id="Q924T7">
    <property type="interactions" value="6"/>
</dbReference>
<dbReference type="MINT" id="Q924T7"/>
<dbReference type="STRING" id="10090.ENSMUSP00000019443"/>
<dbReference type="GlyGen" id="Q924T7">
    <property type="glycosylation" value="2 sites"/>
</dbReference>
<dbReference type="iPTMnet" id="Q924T7"/>
<dbReference type="PhosphoSitePlus" id="Q924T7"/>
<dbReference type="PaxDb" id="10090-ENSMUSP00000019443"/>
<dbReference type="ProteomicsDB" id="300557">
    <molecule id="Q924T7-1"/>
</dbReference>
<dbReference type="ProteomicsDB" id="300558">
    <molecule id="Q924T7-2"/>
</dbReference>
<dbReference type="Pumba" id="Q924T7"/>
<dbReference type="DNASU" id="268749"/>
<dbReference type="Ensembl" id="ENSMUST00000019443.15">
    <molecule id="Q924T7-1"/>
    <property type="protein sequence ID" value="ENSMUSP00000019443.9"/>
    <property type="gene ID" value="ENSMUSG00000047098.19"/>
</dbReference>
<dbReference type="GeneID" id="268749"/>
<dbReference type="KEGG" id="mmu:268749"/>
<dbReference type="UCSC" id="uc007tzi.1">
    <molecule id="Q924T7-1"/>
    <property type="organism name" value="mouse"/>
</dbReference>
<dbReference type="AGR" id="MGI:1934704"/>
<dbReference type="CTD" id="55072"/>
<dbReference type="MGI" id="MGI:1934704">
    <property type="gene designation" value="Rnf31"/>
</dbReference>
<dbReference type="VEuPathDB" id="HostDB:ENSMUSG00000047098"/>
<dbReference type="eggNOG" id="KOG1812">
    <property type="taxonomic scope" value="Eukaryota"/>
</dbReference>
<dbReference type="GeneTree" id="ENSGT00530000064112"/>
<dbReference type="HOGENOM" id="CLU_014581_0_0_1"/>
<dbReference type="InParanoid" id="Q924T7"/>
<dbReference type="OMA" id="LVIMIRE"/>
<dbReference type="OrthoDB" id="9978677at2759"/>
<dbReference type="PhylomeDB" id="Q924T7"/>
<dbReference type="TreeFam" id="TF350529"/>
<dbReference type="Reactome" id="R-MMU-5357786">
    <property type="pathway name" value="TNFR1-induced proapoptotic signaling"/>
</dbReference>
<dbReference type="Reactome" id="R-MMU-5357905">
    <property type="pathway name" value="Regulation of TNFR1 signaling"/>
</dbReference>
<dbReference type="Reactome" id="R-MMU-5357956">
    <property type="pathway name" value="TNFR1-induced NF-kappa-B signaling pathway"/>
</dbReference>
<dbReference type="UniPathway" id="UPA00143"/>
<dbReference type="BioGRID-ORCS" id="268749">
    <property type="hits" value="32 hits in 84 CRISPR screens"/>
</dbReference>
<dbReference type="ChiTaRS" id="Rnf31">
    <property type="organism name" value="mouse"/>
</dbReference>
<dbReference type="PRO" id="PR:Q924T7"/>
<dbReference type="Proteomes" id="UP000000589">
    <property type="component" value="Chromosome 14"/>
</dbReference>
<dbReference type="RNAct" id="Q924T7">
    <property type="molecule type" value="protein"/>
</dbReference>
<dbReference type="Bgee" id="ENSMUSG00000047098">
    <property type="expression patterns" value="Expressed in granulocyte and 232 other cell types or tissues"/>
</dbReference>
<dbReference type="ExpressionAtlas" id="Q924T7">
    <property type="expression patterns" value="baseline and differential"/>
</dbReference>
<dbReference type="GO" id="GO:0035631">
    <property type="term" value="C:CD40 receptor complex"/>
    <property type="evidence" value="ECO:0000314"/>
    <property type="project" value="BHF-UCL"/>
</dbReference>
<dbReference type="GO" id="GO:0009898">
    <property type="term" value="C:cytoplasmic side of plasma membrane"/>
    <property type="evidence" value="ECO:0000314"/>
    <property type="project" value="BHF-UCL"/>
</dbReference>
<dbReference type="GO" id="GO:0005829">
    <property type="term" value="C:cytosol"/>
    <property type="evidence" value="ECO:0000314"/>
    <property type="project" value="MGI"/>
</dbReference>
<dbReference type="GO" id="GO:0071797">
    <property type="term" value="C:LUBAC complex"/>
    <property type="evidence" value="ECO:0000314"/>
    <property type="project" value="MGI"/>
</dbReference>
<dbReference type="GO" id="GO:0042802">
    <property type="term" value="F:identical protein binding"/>
    <property type="evidence" value="ECO:0007669"/>
    <property type="project" value="Ensembl"/>
</dbReference>
<dbReference type="GO" id="GO:0043130">
    <property type="term" value="F:ubiquitin binding"/>
    <property type="evidence" value="ECO:0000250"/>
    <property type="project" value="UniProtKB"/>
</dbReference>
<dbReference type="GO" id="GO:0061630">
    <property type="term" value="F:ubiquitin protein ligase activity"/>
    <property type="evidence" value="ECO:0000315"/>
    <property type="project" value="MGI"/>
</dbReference>
<dbReference type="GO" id="GO:0031625">
    <property type="term" value="F:ubiquitin protein ligase binding"/>
    <property type="evidence" value="ECO:0007669"/>
    <property type="project" value="Ensembl"/>
</dbReference>
<dbReference type="GO" id="GO:0004842">
    <property type="term" value="F:ubiquitin-protein transferase activity"/>
    <property type="evidence" value="ECO:0000250"/>
    <property type="project" value="UniProtKB"/>
</dbReference>
<dbReference type="GO" id="GO:0008270">
    <property type="term" value="F:zinc ion binding"/>
    <property type="evidence" value="ECO:0007669"/>
    <property type="project" value="UniProtKB-KW"/>
</dbReference>
<dbReference type="GO" id="GO:0023035">
    <property type="term" value="P:CD40 signaling pathway"/>
    <property type="evidence" value="ECO:0000315"/>
    <property type="project" value="BHF-UCL"/>
</dbReference>
<dbReference type="GO" id="GO:0042742">
    <property type="term" value="P:defense response to bacterium"/>
    <property type="evidence" value="ECO:0000250"/>
    <property type="project" value="UniProtKB"/>
</dbReference>
<dbReference type="GO" id="GO:0060546">
    <property type="term" value="P:negative regulation of necroptotic process"/>
    <property type="evidence" value="ECO:0000316"/>
    <property type="project" value="MGI"/>
</dbReference>
<dbReference type="GO" id="GO:0043123">
    <property type="term" value="P:positive regulation of canonical NF-kappaB signal transduction"/>
    <property type="evidence" value="ECO:0000315"/>
    <property type="project" value="BHF-UCL"/>
</dbReference>
<dbReference type="GO" id="GO:0051092">
    <property type="term" value="P:positive regulation of NF-kappaB transcription factor activity"/>
    <property type="evidence" value="ECO:0000250"/>
    <property type="project" value="UniProtKB"/>
</dbReference>
<dbReference type="GO" id="GO:1904417">
    <property type="term" value="P:positive regulation of xenophagy"/>
    <property type="evidence" value="ECO:0000250"/>
    <property type="project" value="UniProtKB"/>
</dbReference>
<dbReference type="GO" id="GO:0097039">
    <property type="term" value="P:protein linear polyubiquitination"/>
    <property type="evidence" value="ECO:0000250"/>
    <property type="project" value="UniProtKB"/>
</dbReference>
<dbReference type="GO" id="GO:0000209">
    <property type="term" value="P:protein polyubiquitination"/>
    <property type="evidence" value="ECO:0000315"/>
    <property type="project" value="MGI"/>
</dbReference>
<dbReference type="GO" id="GO:0016567">
    <property type="term" value="P:protein ubiquitination"/>
    <property type="evidence" value="ECO:0000315"/>
    <property type="project" value="BHF-UCL"/>
</dbReference>
<dbReference type="GO" id="GO:0050852">
    <property type="term" value="P:T cell receptor signaling pathway"/>
    <property type="evidence" value="ECO:0000250"/>
    <property type="project" value="UniProtKB"/>
</dbReference>
<dbReference type="GO" id="GO:0033209">
    <property type="term" value="P:tumor necrosis factor-mediated signaling pathway"/>
    <property type="evidence" value="ECO:0000304"/>
    <property type="project" value="MGI"/>
</dbReference>
<dbReference type="CDD" id="cd19815">
    <property type="entry name" value="Bbox1_HOIP"/>
    <property type="match status" value="1"/>
</dbReference>
<dbReference type="CDD" id="cd20337">
    <property type="entry name" value="BRcat_RBR_HOIP"/>
    <property type="match status" value="1"/>
</dbReference>
<dbReference type="CDD" id="cd16631">
    <property type="entry name" value="mRING-HC-C4C4_RBR_HOIP"/>
    <property type="match status" value="1"/>
</dbReference>
<dbReference type="CDD" id="cd20351">
    <property type="entry name" value="Rcat_RBR_HOIP"/>
    <property type="match status" value="1"/>
</dbReference>
<dbReference type="CDD" id="cd14325">
    <property type="entry name" value="UBA_RNF31"/>
    <property type="match status" value="1"/>
</dbReference>
<dbReference type="FunFam" id="1.20.58.2190:FF:000004">
    <property type="entry name" value="E3 ubiquitin-protein ligase RNF31"/>
    <property type="match status" value="1"/>
</dbReference>
<dbReference type="FunFam" id="1.20.120.1750:FF:000015">
    <property type="entry name" value="E3 ubiquitin-protein ligase RNF31 isoform X2"/>
    <property type="match status" value="1"/>
</dbReference>
<dbReference type="Gene3D" id="1.20.120.1750">
    <property type="match status" value="1"/>
</dbReference>
<dbReference type="Gene3D" id="1.20.58.2190">
    <property type="match status" value="1"/>
</dbReference>
<dbReference type="Gene3D" id="6.10.140.1100">
    <property type="match status" value="1"/>
</dbReference>
<dbReference type="Gene3D" id="1.10.8.10">
    <property type="entry name" value="DNA helicase RuvA subunit, C-terminal domain"/>
    <property type="match status" value="1"/>
</dbReference>
<dbReference type="Gene3D" id="4.10.1060.10">
    <property type="entry name" value="Zinc finger, RanBP2-type"/>
    <property type="match status" value="1"/>
</dbReference>
<dbReference type="Gene3D" id="3.30.40.10">
    <property type="entry name" value="Zinc/RING finger domain, C3HC4 (zinc finger)"/>
    <property type="match status" value="1"/>
</dbReference>
<dbReference type="InterPro" id="IPR047543">
    <property type="entry name" value="Bbox1_RNF31-like"/>
</dbReference>
<dbReference type="InterPro" id="IPR047540">
    <property type="entry name" value="BRcat_RBR_RNF31-like"/>
</dbReference>
<dbReference type="InterPro" id="IPR002867">
    <property type="entry name" value="IBR_dom"/>
</dbReference>
<dbReference type="InterPro" id="IPR036339">
    <property type="entry name" value="PUB-like_dom_sf"/>
</dbReference>
<dbReference type="InterPro" id="IPR018997">
    <property type="entry name" value="PUB_domain"/>
</dbReference>
<dbReference type="InterPro" id="IPR047542">
    <property type="entry name" value="Rcat_RBR_RNF31-like"/>
</dbReference>
<dbReference type="InterPro" id="IPR026254">
    <property type="entry name" value="RNF31-like"/>
</dbReference>
<dbReference type="InterPro" id="IPR032065">
    <property type="entry name" value="RNF31-UBA"/>
</dbReference>
<dbReference type="InterPro" id="IPR041031">
    <property type="entry name" value="RNF31_C"/>
</dbReference>
<dbReference type="InterPro" id="IPR040641">
    <property type="entry name" value="RNF31_PUB"/>
</dbReference>
<dbReference type="InterPro" id="IPR047541">
    <property type="entry name" value="RNF31_RBR_mRING-HC-like"/>
</dbReference>
<dbReference type="InterPro" id="IPR044066">
    <property type="entry name" value="TRIAD_supradom"/>
</dbReference>
<dbReference type="InterPro" id="IPR015940">
    <property type="entry name" value="UBA"/>
</dbReference>
<dbReference type="InterPro" id="IPR047539">
    <property type="entry name" value="UBA_RNF31"/>
</dbReference>
<dbReference type="InterPro" id="IPR001876">
    <property type="entry name" value="Znf_RanBP2"/>
</dbReference>
<dbReference type="InterPro" id="IPR036443">
    <property type="entry name" value="Znf_RanBP2_sf"/>
</dbReference>
<dbReference type="InterPro" id="IPR013083">
    <property type="entry name" value="Znf_RING/FYVE/PHD"/>
</dbReference>
<dbReference type="InterPro" id="IPR017907">
    <property type="entry name" value="Znf_RING_CS"/>
</dbReference>
<dbReference type="PANTHER" id="PTHR16004:SF5">
    <property type="entry name" value="E3 UBIQUITIN-PROTEIN LIGASE RNF31"/>
    <property type="match status" value="1"/>
</dbReference>
<dbReference type="PANTHER" id="PTHR16004">
    <property type="entry name" value="RING FINGER PROTEIN 31-RELATED"/>
    <property type="match status" value="1"/>
</dbReference>
<dbReference type="Pfam" id="PF18091">
    <property type="entry name" value="E3_UbLigase_RBR"/>
    <property type="match status" value="1"/>
</dbReference>
<dbReference type="Pfam" id="PF22191">
    <property type="entry name" value="IBR_1"/>
    <property type="match status" value="2"/>
</dbReference>
<dbReference type="Pfam" id="PF09409">
    <property type="entry name" value="PUB"/>
    <property type="match status" value="1"/>
</dbReference>
<dbReference type="Pfam" id="PF18486">
    <property type="entry name" value="PUB_1"/>
    <property type="match status" value="1"/>
</dbReference>
<dbReference type="Pfam" id="PF16678">
    <property type="entry name" value="UBA_HOIP"/>
    <property type="match status" value="1"/>
</dbReference>
<dbReference type="Pfam" id="PF25163">
    <property type="entry name" value="UBA_RNF31"/>
    <property type="match status" value="1"/>
</dbReference>
<dbReference type="SMART" id="SM00647">
    <property type="entry name" value="IBR"/>
    <property type="match status" value="2"/>
</dbReference>
<dbReference type="SMART" id="SM00547">
    <property type="entry name" value="ZnF_RBZ"/>
    <property type="match status" value="3"/>
</dbReference>
<dbReference type="SUPFAM" id="SSF143503">
    <property type="entry name" value="PUG domain-like"/>
    <property type="match status" value="1"/>
</dbReference>
<dbReference type="SUPFAM" id="SSF90209">
    <property type="entry name" value="Ran binding protein zinc finger-like"/>
    <property type="match status" value="2"/>
</dbReference>
<dbReference type="SUPFAM" id="SSF57850">
    <property type="entry name" value="RING/U-box"/>
    <property type="match status" value="3"/>
</dbReference>
<dbReference type="PROSITE" id="PS51873">
    <property type="entry name" value="TRIAD"/>
    <property type="match status" value="1"/>
</dbReference>
<dbReference type="PROSITE" id="PS50030">
    <property type="entry name" value="UBA"/>
    <property type="match status" value="1"/>
</dbReference>
<dbReference type="PROSITE" id="PS01358">
    <property type="entry name" value="ZF_RANBP2_1"/>
    <property type="match status" value="3"/>
</dbReference>
<dbReference type="PROSITE" id="PS50199">
    <property type="entry name" value="ZF_RANBP2_2"/>
    <property type="match status" value="1"/>
</dbReference>
<dbReference type="PROSITE" id="PS00518">
    <property type="entry name" value="ZF_RING_1"/>
    <property type="match status" value="1"/>
</dbReference>
<accession>Q924T7</accession>
<proteinExistence type="evidence at protein level"/>
<name>RNF31_MOUSE</name>
<sequence>MPGDEERGFLAAREELASALRWDSAQVFPLEQLMPLLATSLPPAARYLQLDAGRLVRCNAHGEPRNYLNTLSTALNILEKYGRNLLSPQRPRYWRSVKFNNPVFRSTVDAVQGGRDVLRLYGYTEERPDGLSFPEGQEEPDEYQVAVVTLEVLLLRTELSLLLQNTHPRQNALDQLLRESVEDGMLQLSEFHPLLREIVPGPRPSAQGSTPGPCFLCGSAPGTLHCPACNQVSCPACDILFHGHPSRAHHLRQALPGSHQTASLSSSLPASSQPRPPSSSLALGDSSLSSPDPANACLPWHCLTCATLNEPWAVFCAVCSQPKGCKVPGIEGSHGTGGLEPEPARDQWACQSCTFENEAAAVLCAICERPRLAQPPSLVVDSHDAGVCQQSLKQEDPLLTAAQPQVWYCDHCTFCNSGPVWVCAMCNRTRDPIPTQPALQSYPSSLEKGRPKPGSSQHLGSSLPASCGDPEKQRQDKMRKEGLQLVSMIQEGETAGASPEEVFSALQYSGTEVPLQWLRSELSYVLEMVAELAGQQDPELGAFSCQEARKAWLDRHGNLDEAVEECVRARRRKVHELQSLGFGPKEGSLQALFQHGGDVARALTELQRQRLEPFHQRLWDRDPEPTPCWDGLDRQSLVRRLLAVYTLPSWGRAELALALLQETPRNYELLDVVEAVRHSQDRAFLRRLLAQECAVCGWALPRNRMQALISCECTICPECFRQHFTIALKEKHITDMVCPACGRPDLTDDAQLLSYFSTLDIQLRESLDPDAYALFHKKLTEAVLMRDPKFLWCAQCSFGFIYEREQLEATCPQCHQTFCVRCKRQWEEQHRGRSCEDFQNWKRTNDPEYQAQGLAMYLQENGIDCPKCKFSYALARGGCMHFHCTQCRHQFCSGCYNAFYAKNKCPDPNCKVKKSLHGHHPRDCLFYLRDWTAARLQKLLQDNNVMFNTEPPAGTRAVPGGGCRVMEQKEVHSGFRDEACGKETPPGYAGLCQAHYKEYLVSLINAHSLDPATLYEVEELETATIRYLHLAPQPADGEDLPAYQARLLQKLREEVPLGQSIARRRK</sequence>
<keyword id="KW-0002">3D-structure</keyword>
<keyword id="KW-0025">Alternative splicing</keyword>
<keyword id="KW-0963">Cytoplasm</keyword>
<keyword id="KW-0479">Metal-binding</keyword>
<keyword id="KW-0597">Phosphoprotein</keyword>
<keyword id="KW-1185">Reference proteome</keyword>
<keyword id="KW-0677">Repeat</keyword>
<keyword id="KW-0808">Transferase</keyword>
<keyword id="KW-0832">Ubl conjugation</keyword>
<keyword id="KW-0833">Ubl conjugation pathway</keyword>
<keyword id="KW-0862">Zinc</keyword>
<keyword id="KW-0863">Zinc-finger</keyword>
<reference key="1">
    <citation type="journal article" date="2001" name="Immunogenetics">
        <title>Nucleotide sequence analysis of the ~35-kb segment containing interferon-gamma-inducible mouse proteasome activator genes.</title>
        <authorList>
            <person name="Yawata M."/>
            <person name="Murata S."/>
            <person name="Tanaka K."/>
            <person name="Ishigatsubo Y."/>
            <person name="Kasahara M."/>
        </authorList>
    </citation>
    <scope>NUCLEOTIDE SEQUENCE [GENOMIC DNA] (ISOFORM 2)</scope>
    <source>
        <strain>129/SvJ</strain>
    </source>
</reference>
<reference key="2">
    <citation type="journal article" date="2004" name="Genome Res.">
        <title>The status, quality, and expansion of the NIH full-length cDNA project: the Mammalian Gene Collection (MGC).</title>
        <authorList>
            <consortium name="The MGC Project Team"/>
        </authorList>
    </citation>
    <scope>NUCLEOTIDE SEQUENCE [LARGE SCALE MRNA] (ISOFORM 1)</scope>
    <source>
        <strain>C57BL/6J</strain>
        <tissue>Brain</tissue>
    </source>
</reference>
<reference key="3">
    <citation type="journal article" date="2004" name="Gene Expr. Patterns">
        <title>A putative ariadne-like E3 ubiquitin ligase (PAUL) that interacts with the muscle-specific kinase (MuSK).</title>
        <authorList>
            <person name="Bromann P.A."/>
            <person name="Weiner J.A."/>
            <person name="Apel E.D."/>
            <person name="Lewis R.M."/>
            <person name="Sanes J.R."/>
        </authorList>
    </citation>
    <scope>INTERACTION WITH MUSK</scope>
    <scope>SUBCELLULAR LOCATION</scope>
    <scope>TISSUE SPECIFICITY</scope>
</reference>
<reference key="4">
    <citation type="journal article" date="2010" name="Cell">
        <title>A tissue-specific atlas of mouse protein phosphorylation and expression.</title>
        <authorList>
            <person name="Huttlin E.L."/>
            <person name="Jedrychowski M.P."/>
            <person name="Elias J.E."/>
            <person name="Goswami T."/>
            <person name="Rad R."/>
            <person name="Beausoleil S.A."/>
            <person name="Villen J."/>
            <person name="Haas W."/>
            <person name="Sowa M.E."/>
            <person name="Gygi S.P."/>
        </authorList>
    </citation>
    <scope>IDENTIFICATION BY MASS SPECTROMETRY [LARGE SCALE ANALYSIS]</scope>
    <source>
        <tissue>Brain</tissue>
        <tissue>Heart</tissue>
        <tissue>Lung</tissue>
        <tissue>Pancreas</tissue>
    </source>
</reference>
<reference key="5">
    <citation type="journal article" date="2013" name="Nature">
        <title>The linear ubiquitin-specific deubiquitinase gumby regulates angiogenesis.</title>
        <authorList>
            <person name="Rivkin E."/>
            <person name="Almeida S.M."/>
            <person name="Ceccarelli D.F."/>
            <person name="Juang Y.C."/>
            <person name="Maclean T.A."/>
            <person name="Srikumar T."/>
            <person name="Huang H."/>
            <person name="Dunham W.H."/>
            <person name="Fukumura R."/>
            <person name="Xie G."/>
            <person name="Gondo Y."/>
            <person name="Raught B."/>
            <person name="Gingras A.C."/>
            <person name="Sicheri F."/>
            <person name="Cordes S.P."/>
        </authorList>
    </citation>
    <scope>INTERACTION WITH OTULIN</scope>
</reference>
<reference key="6">
    <citation type="journal article" date="2017" name="Genes Dev.">
        <title>SPATA2 regulates the activation of RIPK1 by modulating linear ubiquitination.</title>
        <authorList>
            <person name="Wei R."/>
            <person name="Xu L.W."/>
            <person name="Liu J."/>
            <person name="Li Y."/>
            <person name="Zhang P."/>
            <person name="Shan B."/>
            <person name="Lu X."/>
            <person name="Qian L."/>
            <person name="Wu Z."/>
            <person name="Dong K."/>
            <person name="Zhu H."/>
            <person name="Pan L."/>
            <person name="Yuan J."/>
            <person name="Pan H."/>
        </authorList>
    </citation>
    <scope>FUNCTION</scope>
</reference>
<reference key="7">
    <citation type="journal article" date="2018" name="Nature">
        <title>OTULIN limits cell death and inflammation by deubiquitinating LUBAC.</title>
        <authorList>
            <person name="Heger K."/>
            <person name="Wickliffe K.E."/>
            <person name="Ndoja A."/>
            <person name="Zhang J."/>
            <person name="Murthy A."/>
            <person name="Dugger D.L."/>
            <person name="Maltzman A."/>
            <person name="de Sousa E Melo F."/>
            <person name="Hung J."/>
            <person name="Zeng Y."/>
            <person name="Verschueren E."/>
            <person name="Kirkpatrick D.S."/>
            <person name="Vucic D."/>
            <person name="Lee W.P."/>
            <person name="Roose-Girma M."/>
            <person name="Newman R.J."/>
            <person name="Warming S."/>
            <person name="Hsiao Y.C."/>
            <person name="Komuves L.G."/>
            <person name="Webster J.D."/>
            <person name="Newton K."/>
            <person name="Dixit V.M."/>
        </authorList>
    </citation>
    <scope>AUTOUBIQUITINATION</scope>
    <scope>INTERACTION WITH OTULIN</scope>
</reference>
<gene>
    <name evidence="14" type="primary">Rnf31</name>
    <name evidence="12" type="synonym">Paul</name>
</gene>
<protein>
    <recommendedName>
        <fullName>E3 ubiquitin-protein ligase RNF31</fullName>
        <ecNumber evidence="2">2.3.2.31</ecNumber>
    </recommendedName>
    <alternativeName>
        <fullName evidence="2">HOIL-1-interacting protein</fullName>
        <shortName evidence="2">HOIP</shortName>
    </alternativeName>
    <alternativeName>
        <fullName evidence="12">Putative Ariadne-like ubiquitin ligase</fullName>
        <shortName evidence="12">PAUL</shortName>
    </alternativeName>
    <alternativeName>
        <fullName evidence="14">RING finger protein 31</fullName>
    </alternativeName>
    <alternativeName>
        <fullName evidence="13">RING-type E3 ubiquitin transferase RNF31</fullName>
    </alternativeName>
</protein>
<feature type="chain" id="PRO_0000056070" description="E3 ubiquitin-protein ligase RNF31">
    <location>
        <begin position="1"/>
        <end position="1066"/>
    </location>
</feature>
<feature type="domain" description="PUB" evidence="3">
    <location>
        <begin position="70"/>
        <end position="141"/>
    </location>
</feature>
<feature type="domain" description="UBA" evidence="4">
    <location>
        <begin position="558"/>
        <end position="609"/>
    </location>
</feature>
<feature type="zinc finger region" description="RanBP2-type 1" evidence="5">
    <location>
        <begin position="293"/>
        <end position="325"/>
    </location>
</feature>
<feature type="zinc finger region" description="RanBP2-type 2" evidence="5">
    <location>
        <begin position="344"/>
        <end position="373"/>
    </location>
</feature>
<feature type="zinc finger region" description="RanBP2-type 3" evidence="5">
    <location>
        <begin position="403"/>
        <end position="432"/>
    </location>
</feature>
<feature type="zinc finger region" description="RING-type 1" evidence="6">
    <location>
        <begin position="693"/>
        <end position="743"/>
    </location>
</feature>
<feature type="zinc finger region" description="IBR-type" evidence="6">
    <location>
        <begin position="773"/>
        <end position="835"/>
    </location>
</feature>
<feature type="zinc finger region" description="RING-type 2; atypical" evidence="6">
    <location>
        <begin position="865"/>
        <end position="895"/>
    </location>
</feature>
<feature type="region of interest" description="Polyubiquitin-binding" evidence="1">
    <location>
        <begin position="1"/>
        <end position="479"/>
    </location>
</feature>
<feature type="region of interest" description="Disordered" evidence="7">
    <location>
        <begin position="251"/>
        <end position="287"/>
    </location>
</feature>
<feature type="region of interest" description="Disordered" evidence="7">
    <location>
        <begin position="434"/>
        <end position="478"/>
    </location>
</feature>
<feature type="region of interest" description="Interaction with RBCK1" evidence="1">
    <location>
        <begin position="557"/>
        <end position="610"/>
    </location>
</feature>
<feature type="region of interest" description="TRIAD supradomain" evidence="6">
    <location>
        <begin position="689"/>
        <end position="923"/>
    </location>
</feature>
<feature type="region of interest" description="LDD domain" evidence="1">
    <location>
        <begin position="904"/>
        <end position="1066"/>
    </location>
</feature>
<feature type="compositionally biased region" description="Low complexity" evidence="7">
    <location>
        <begin position="262"/>
        <end position="287"/>
    </location>
</feature>
<feature type="compositionally biased region" description="Polar residues" evidence="7">
    <location>
        <begin position="454"/>
        <end position="464"/>
    </location>
</feature>
<feature type="compositionally biased region" description="Basic and acidic residues" evidence="7">
    <location>
        <begin position="469"/>
        <end position="478"/>
    </location>
</feature>
<feature type="active site" evidence="6">
    <location>
        <position position="879"/>
    </location>
</feature>
<feature type="binding site" evidence="6">
    <location>
        <position position="693"/>
    </location>
    <ligand>
        <name>Zn(2+)</name>
        <dbReference type="ChEBI" id="CHEBI:29105"/>
        <label>1</label>
    </ligand>
</feature>
<feature type="binding site" evidence="6">
    <location>
        <position position="696"/>
    </location>
    <ligand>
        <name>Zn(2+)</name>
        <dbReference type="ChEBI" id="CHEBI:29105"/>
        <label>1</label>
    </ligand>
</feature>
<feature type="binding site" evidence="2">
    <location>
        <position position="711"/>
    </location>
    <ligand>
        <name>Zn(2+)</name>
        <dbReference type="ChEBI" id="CHEBI:29105"/>
        <label>2</label>
    </ligand>
</feature>
<feature type="binding site" evidence="2">
    <location>
        <position position="713"/>
    </location>
    <ligand>
        <name>Zn(2+)</name>
        <dbReference type="ChEBI" id="CHEBI:29105"/>
        <label>2</label>
    </ligand>
</feature>
<feature type="binding site" evidence="6">
    <location>
        <position position="716"/>
    </location>
    <ligand>
        <name>Zn(2+)</name>
        <dbReference type="ChEBI" id="CHEBI:29105"/>
        <label>1</label>
    </ligand>
</feature>
<feature type="binding site" evidence="6">
    <location>
        <position position="719"/>
    </location>
    <ligand>
        <name>Zn(2+)</name>
        <dbReference type="ChEBI" id="CHEBI:29105"/>
        <label>1</label>
    </ligand>
</feature>
<feature type="binding site" evidence="2">
    <location>
        <position position="738"/>
    </location>
    <ligand>
        <name>Zn(2+)</name>
        <dbReference type="ChEBI" id="CHEBI:29105"/>
        <label>2</label>
    </ligand>
</feature>
<feature type="binding site" evidence="2">
    <location>
        <position position="741"/>
    </location>
    <ligand>
        <name>Zn(2+)</name>
        <dbReference type="ChEBI" id="CHEBI:29105"/>
        <label>2</label>
    </ligand>
</feature>
<feature type="binding site" evidence="6">
    <location>
        <position position="793"/>
    </location>
    <ligand>
        <name>Zn(2+)</name>
        <dbReference type="ChEBI" id="CHEBI:29105"/>
        <label>3</label>
    </ligand>
</feature>
<feature type="binding site" evidence="6">
    <location>
        <position position="796"/>
    </location>
    <ligand>
        <name>Zn(2+)</name>
        <dbReference type="ChEBI" id="CHEBI:29105"/>
        <label>3</label>
    </ligand>
</feature>
<feature type="binding site" evidence="6">
    <location>
        <position position="811"/>
    </location>
    <ligand>
        <name>Zn(2+)</name>
        <dbReference type="ChEBI" id="CHEBI:29105"/>
        <label>3</label>
    </ligand>
</feature>
<feature type="binding site" evidence="6">
    <location>
        <position position="814"/>
    </location>
    <ligand>
        <name>Zn(2+)</name>
        <dbReference type="ChEBI" id="CHEBI:29105"/>
        <label>3</label>
    </ligand>
</feature>
<feature type="binding site" evidence="6">
    <location>
        <position position="819"/>
    </location>
    <ligand>
        <name>Zn(2+)</name>
        <dbReference type="ChEBI" id="CHEBI:29105"/>
        <label>4</label>
    </ligand>
</feature>
<feature type="binding site" evidence="6">
    <location>
        <position position="822"/>
    </location>
    <ligand>
        <name>Zn(2+)</name>
        <dbReference type="ChEBI" id="CHEBI:29105"/>
        <label>4</label>
    </ligand>
</feature>
<feature type="binding site" evidence="6">
    <location>
        <position position="830"/>
    </location>
    <ligand>
        <name>Zn(2+)</name>
        <dbReference type="ChEBI" id="CHEBI:29105"/>
        <label>4</label>
    </ligand>
</feature>
<feature type="binding site" evidence="6">
    <location>
        <position position="835"/>
    </location>
    <ligand>
        <name>Zn(2+)</name>
        <dbReference type="ChEBI" id="CHEBI:29105"/>
        <label>4</label>
    </ligand>
</feature>
<feature type="binding site" evidence="6">
    <location>
        <position position="865"/>
    </location>
    <ligand>
        <name>Zn(2+)</name>
        <dbReference type="ChEBI" id="CHEBI:29105"/>
        <label>5</label>
    </ligand>
</feature>
<feature type="binding site" evidence="6">
    <location>
        <position position="868"/>
    </location>
    <ligand>
        <name>Zn(2+)</name>
        <dbReference type="ChEBI" id="CHEBI:29105"/>
        <label>5</label>
    </ligand>
</feature>
<feature type="binding site" evidence="6">
    <location>
        <position position="884"/>
    </location>
    <ligand>
        <name>Zn(2+)</name>
        <dbReference type="ChEBI" id="CHEBI:29105"/>
        <label>5</label>
    </ligand>
</feature>
<feature type="binding site" evidence="6">
    <location>
        <position position="887"/>
    </location>
    <ligand>
        <name>Zn(2+)</name>
        <dbReference type="ChEBI" id="CHEBI:29105"/>
        <label>5</label>
    </ligand>
</feature>
<feature type="binding site" evidence="6">
    <location>
        <position position="892"/>
    </location>
    <ligand>
        <name>Zn(2+)</name>
        <dbReference type="ChEBI" id="CHEBI:29105"/>
        <label>6</label>
    </ligand>
</feature>
<feature type="binding site" evidence="6">
    <location>
        <position position="895"/>
    </location>
    <ligand>
        <name>Zn(2+)</name>
        <dbReference type="ChEBI" id="CHEBI:29105"/>
        <label>6</label>
    </ligand>
</feature>
<feature type="binding site" evidence="6">
    <location>
        <position position="910"/>
    </location>
    <ligand>
        <name>Zn(2+)</name>
        <dbReference type="ChEBI" id="CHEBI:29105"/>
        <label>6</label>
    </ligand>
</feature>
<feature type="binding site" evidence="6">
    <location>
        <position position="919"/>
    </location>
    <ligand>
        <name>Zn(2+)</name>
        <dbReference type="ChEBI" id="CHEBI:29105"/>
        <label>6</label>
    </ligand>
</feature>
<feature type="site" description="Cleavage; by caspase" evidence="2">
    <location>
        <begin position="384"/>
        <end position="385"/>
    </location>
</feature>
<feature type="modified residue" description="Phosphoserine" evidence="2">
    <location>
        <position position="377"/>
    </location>
</feature>
<feature type="splice variant" id="VSP_009649" description="In isoform 2." evidence="13">
    <location>
        <begin position="826"/>
        <end position="834"/>
    </location>
</feature>
<feature type="helix" evidence="15">
    <location>
        <begin position="474"/>
        <end position="494"/>
    </location>
</feature>
<feature type="helix" evidence="15">
    <location>
        <begin position="499"/>
        <end position="509"/>
    </location>
</feature>
<feature type="helix" evidence="15">
    <location>
        <begin position="514"/>
        <end position="536"/>
    </location>
</feature>
<feature type="helix" evidence="15">
    <location>
        <begin position="538"/>
        <end position="540"/>
    </location>
</feature>
<feature type="helix" evidence="15">
    <location>
        <begin position="545"/>
        <end position="554"/>
    </location>
</feature>
<feature type="turn" evidence="15">
    <location>
        <begin position="555"/>
        <end position="557"/>
    </location>
</feature>
<feature type="helix" evidence="15">
    <location>
        <begin position="559"/>
        <end position="579"/>
    </location>
</feature>
<feature type="helix" evidence="15">
    <location>
        <begin position="584"/>
        <end position="586"/>
    </location>
</feature>
<feature type="helix" evidence="15">
    <location>
        <begin position="588"/>
        <end position="594"/>
    </location>
</feature>
<feature type="turn" evidence="15">
    <location>
        <begin position="595"/>
        <end position="597"/>
    </location>
</feature>
<feature type="helix" evidence="15">
    <location>
        <begin position="599"/>
        <end position="617"/>
    </location>
</feature>